<reference key="1">
    <citation type="journal article" date="1991" name="J. Biol. Chem.">
        <title>Primary sequence of the glucanase gene from Oerskovia xanthineolytica. Expression and purification of the enzyme from Escherichia coli.</title>
        <authorList>
            <person name="Shen S.-H."/>
            <person name="Chretien P."/>
            <person name="Bastien L."/>
            <person name="Slilaty S.N."/>
        </authorList>
    </citation>
    <scope>NUCLEOTIDE SEQUENCE [GENOMIC DNA]</scope>
    <scope>PROTEIN SEQUENCE OF 37-63</scope>
    <scope>SUBCELLULAR LOCATION</scope>
</reference>
<organism>
    <name type="scientific">Cellulosimicrobium cellulans</name>
    <name type="common">Arthrobacter luteus</name>
    <dbReference type="NCBI Taxonomy" id="1710"/>
    <lineage>
        <taxon>Bacteria</taxon>
        <taxon>Bacillati</taxon>
        <taxon>Actinomycetota</taxon>
        <taxon>Actinomycetes</taxon>
        <taxon>Micrococcales</taxon>
        <taxon>Promicromonosporaceae</taxon>
        <taxon>Cellulosimicrobium</taxon>
    </lineage>
</organism>
<sequence length="548" mass="58089">MPHDRKNSSRRAWAALCAAVLAVSGALVGVAAPASAVPATIPLTITNDSGRGPIYLYVLGERDGVAGWADAGGTFHPWPGGVGPVPVPAPDASIAGPGPGQSVTIRLPKLSGRVYYSYGQKMTFQIVLDGRLVQPAVQNDSDPNRNILFNWTEYTLNDGGLWINSTQVDHWSAPYQVGVQRADGQVLSTGMLKPNGYEAFYTALEGAGWGGLVQRAPDGSRLRALNPSHGIDVGKISSASIDSYVTEVWNSYRTRDMVVTPFSHEPGTQFRGRVDGDWFRFRSGSGQEVAAFKKPDASSVYGCHKDLQAPNDHVVGPIARTLCAALVRTTALTNPNQPDANSAGFYQDARTNVYAKLAHQQMANGKAYAFAFDDVGAHESLVHDGNPQAAYIKLDPFTGTATPLGNGGSTEQPGTPGGLPAGTGALRIGSTLCLDVPWADPTDTNQVQLATCSGNAAQQWTRGTDGTVRALGKCLDVARSGTADGTAVWIYTCNGTGAQKWTYDSATKALRNPQSGKCLDAQGGAPLRDGQKVQLWTCNQTEAQRWTL</sequence>
<feature type="signal peptide" description="Tat-type signal" evidence="2 4">
    <location>
        <begin position="1"/>
        <end position="36"/>
    </location>
</feature>
<feature type="chain" id="PRO_0000012235" description="Glucan endo-1,3-beta-glucosidase">
    <location>
        <begin position="37"/>
        <end position="548"/>
    </location>
</feature>
<feature type="domain" description="GH64" evidence="3">
    <location>
        <begin position="38"/>
        <end position="396"/>
    </location>
</feature>
<feature type="domain" description="Ricin B-type lectin" evidence="1">
    <location>
        <begin position="422"/>
        <end position="548"/>
    </location>
</feature>
<feature type="region of interest" description="Possesses beta-glucanase activity, but is unable to lyse viable cells">
    <location>
        <begin position="37"/>
        <end position="430"/>
    </location>
</feature>
<feature type="region of interest" description="Essential for the lytic activity, but not for the beta-glucanase function">
    <location>
        <begin position="472"/>
        <end position="548"/>
    </location>
</feature>
<feature type="active site" description="Proton donor" evidence="3">
    <location>
        <position position="153"/>
    </location>
</feature>
<feature type="active site" description="Proton acceptor" evidence="3">
    <location>
        <position position="169"/>
    </location>
</feature>
<protein>
    <recommendedName>
        <fullName>Glucan endo-1,3-beta-glucosidase</fullName>
        <ecNumber>3.2.1.39</ecNumber>
    </recommendedName>
    <alternativeName>
        <fullName>(1-&gt;3)-beta-glucan endohydrolase</fullName>
        <shortName>(1-&gt;3)-beta-glucanase</shortName>
    </alternativeName>
</protein>
<proteinExistence type="evidence at protein level"/>
<name>E13B_CELCE</name>
<comment type="function">
    <text>Lysis of cellular walls containing beta-1,3-glucans. Implicated in the defense against fungal pathogens.</text>
</comment>
<comment type="catalytic activity">
    <reaction>
        <text>Hydrolysis of (1-&gt;3)-beta-D-glucosidic linkages in (1-&gt;3)-beta-D-glucans.</text>
        <dbReference type="EC" id="3.2.1.39"/>
    </reaction>
</comment>
<comment type="subcellular location">
    <subcellularLocation>
        <location evidence="4">Periplasm</location>
    </subcellularLocation>
</comment>
<comment type="PTM">
    <text>Predicted to be exported by the Tat system. The position of the signal peptide cleavage has been experimentally proven.</text>
</comment>
<comment type="similarity">
    <text evidence="3 5">Belongs to the glycosyl hydrolase 64 family.</text>
</comment>
<evidence type="ECO:0000255" key="1">
    <source>
        <dbReference type="PROSITE-ProRule" id="PRU00174"/>
    </source>
</evidence>
<evidence type="ECO:0000255" key="2">
    <source>
        <dbReference type="PROSITE-ProRule" id="PRU00648"/>
    </source>
</evidence>
<evidence type="ECO:0000255" key="3">
    <source>
        <dbReference type="PROSITE-ProRule" id="PRU01350"/>
    </source>
</evidence>
<evidence type="ECO:0000269" key="4">
    <source>
    </source>
</evidence>
<evidence type="ECO:0000305" key="5"/>
<dbReference type="EC" id="3.2.1.39"/>
<dbReference type="EMBL" id="M60826">
    <property type="protein sequence ID" value="AAA25520.1"/>
    <property type="molecule type" value="Genomic_DNA"/>
</dbReference>
<dbReference type="PIR" id="A39094">
    <property type="entry name" value="A39094"/>
</dbReference>
<dbReference type="SMR" id="P22222"/>
<dbReference type="CAZy" id="CBM13">
    <property type="family name" value="Carbohydrate-Binding Module Family 13"/>
</dbReference>
<dbReference type="CAZy" id="GH64">
    <property type="family name" value="Glycoside Hydrolase Family 64"/>
</dbReference>
<dbReference type="BRENDA" id="3.2.1.39">
    <property type="organism ID" value="447"/>
</dbReference>
<dbReference type="GO" id="GO:0042597">
    <property type="term" value="C:periplasmic space"/>
    <property type="evidence" value="ECO:0007669"/>
    <property type="project" value="UniProtKB-SubCell"/>
</dbReference>
<dbReference type="GO" id="GO:0030246">
    <property type="term" value="F:carbohydrate binding"/>
    <property type="evidence" value="ECO:0007669"/>
    <property type="project" value="UniProtKB-KW"/>
</dbReference>
<dbReference type="GO" id="GO:0042973">
    <property type="term" value="F:glucan endo-1,3-beta-D-glucosidase activity"/>
    <property type="evidence" value="ECO:0007669"/>
    <property type="project" value="UniProtKB-EC"/>
</dbReference>
<dbReference type="GO" id="GO:0071555">
    <property type="term" value="P:cell wall organization"/>
    <property type="evidence" value="ECO:0007669"/>
    <property type="project" value="UniProtKB-KW"/>
</dbReference>
<dbReference type="CDD" id="cd23451">
    <property type="entry name" value="beta-trefoil_Ricin_laminarinase"/>
    <property type="match status" value="1"/>
</dbReference>
<dbReference type="CDD" id="cd09216">
    <property type="entry name" value="GH64-LPHase-like"/>
    <property type="match status" value="1"/>
</dbReference>
<dbReference type="Gene3D" id="2.80.10.50">
    <property type="match status" value="2"/>
</dbReference>
<dbReference type="Gene3D" id="3.30.920.50">
    <property type="entry name" value="Beta-1,3-glucanase, C-terminal domain"/>
    <property type="match status" value="1"/>
</dbReference>
<dbReference type="Gene3D" id="2.60.110.10">
    <property type="entry name" value="Thaumatin"/>
    <property type="match status" value="1"/>
</dbReference>
<dbReference type="InterPro" id="IPR032477">
    <property type="entry name" value="Glyco_hydro_64"/>
</dbReference>
<dbReference type="InterPro" id="IPR037398">
    <property type="entry name" value="Glyco_hydro_64_fam"/>
</dbReference>
<dbReference type="InterPro" id="IPR042517">
    <property type="entry name" value="Glyco_hydro_64_N_2"/>
</dbReference>
<dbReference type="InterPro" id="IPR037176">
    <property type="entry name" value="Osmotin/thaumatin-like_sf"/>
</dbReference>
<dbReference type="InterPro" id="IPR035992">
    <property type="entry name" value="Ricin_B-like_lectins"/>
</dbReference>
<dbReference type="InterPro" id="IPR000772">
    <property type="entry name" value="Ricin_B_lectin"/>
</dbReference>
<dbReference type="InterPro" id="IPR006311">
    <property type="entry name" value="TAT_signal"/>
</dbReference>
<dbReference type="PANTHER" id="PTHR38165">
    <property type="match status" value="1"/>
</dbReference>
<dbReference type="PANTHER" id="PTHR38165:SF1">
    <property type="entry name" value="GLUCANASE B"/>
    <property type="match status" value="1"/>
</dbReference>
<dbReference type="Pfam" id="PF16483">
    <property type="entry name" value="Glyco_hydro_64"/>
    <property type="match status" value="1"/>
</dbReference>
<dbReference type="Pfam" id="PF00652">
    <property type="entry name" value="Ricin_B_lectin"/>
    <property type="match status" value="1"/>
</dbReference>
<dbReference type="SMART" id="SM00458">
    <property type="entry name" value="RICIN"/>
    <property type="match status" value="1"/>
</dbReference>
<dbReference type="SUPFAM" id="SSF50370">
    <property type="entry name" value="Ricin B-like lectins"/>
    <property type="match status" value="1"/>
</dbReference>
<dbReference type="PROSITE" id="PS52006">
    <property type="entry name" value="GH64"/>
    <property type="match status" value="1"/>
</dbReference>
<dbReference type="PROSITE" id="PS50231">
    <property type="entry name" value="RICIN_B_LECTIN"/>
    <property type="match status" value="1"/>
</dbReference>
<dbReference type="PROSITE" id="PS51318">
    <property type="entry name" value="TAT"/>
    <property type="match status" value="1"/>
</dbReference>
<keyword id="KW-0961">Cell wall biogenesis/degradation</keyword>
<keyword id="KW-0903">Direct protein sequencing</keyword>
<keyword id="KW-0326">Glycosidase</keyword>
<keyword id="KW-0378">Hydrolase</keyword>
<keyword id="KW-0430">Lectin</keyword>
<keyword id="KW-0574">Periplasm</keyword>
<keyword id="KW-0732">Signal</keyword>
<accession>P22222</accession>